<accession>P60741</accession>
<comment type="function">
    <text evidence="1">One of two assembly initiator proteins, it binds directly to the 5'-end of the 23S rRNA, where it nucleates assembly of the 50S subunit.</text>
</comment>
<comment type="function">
    <text evidence="1">One of the proteins that surrounds the polypeptide exit tunnel on the outside of the subunit.</text>
</comment>
<comment type="subunit">
    <text evidence="1">Part of the 50S ribosomal subunit.</text>
</comment>
<comment type="similarity">
    <text evidence="1">Belongs to the universal ribosomal protein uL24 family.</text>
</comment>
<gene>
    <name evidence="1" type="primary">rplX</name>
    <name type="ordered locus">LJ_0349</name>
</gene>
<evidence type="ECO:0000255" key="1">
    <source>
        <dbReference type="HAMAP-Rule" id="MF_01326"/>
    </source>
</evidence>
<evidence type="ECO:0000305" key="2"/>
<reference key="1">
    <citation type="journal article" date="2004" name="Proc. Natl. Acad. Sci. U.S.A.">
        <title>The genome sequence of the probiotic intestinal bacterium Lactobacillus johnsonii NCC 533.</title>
        <authorList>
            <person name="Pridmore R.D."/>
            <person name="Berger B."/>
            <person name="Desiere F."/>
            <person name="Vilanova D."/>
            <person name="Barretto C."/>
            <person name="Pittet A.-C."/>
            <person name="Zwahlen M.-C."/>
            <person name="Rouvet M."/>
            <person name="Altermann E."/>
            <person name="Barrangou R."/>
            <person name="Mollet B."/>
            <person name="Mercenier A."/>
            <person name="Klaenhammer T."/>
            <person name="Arigoni F."/>
            <person name="Schell M.A."/>
        </authorList>
    </citation>
    <scope>NUCLEOTIDE SEQUENCE [LARGE SCALE GENOMIC DNA]</scope>
    <source>
        <strain>CNCM I-1225 / La1 / NCC 533</strain>
    </source>
</reference>
<proteinExistence type="inferred from homology"/>
<feature type="chain" id="PRO_0000130666" description="Large ribosomal subunit protein uL24">
    <location>
        <begin position="1"/>
        <end position="79"/>
    </location>
</feature>
<organism>
    <name type="scientific">Lactobacillus johnsonii (strain CNCM I-12250 / La1 / NCC 533)</name>
    <dbReference type="NCBI Taxonomy" id="257314"/>
    <lineage>
        <taxon>Bacteria</taxon>
        <taxon>Bacillati</taxon>
        <taxon>Bacillota</taxon>
        <taxon>Bacilli</taxon>
        <taxon>Lactobacillales</taxon>
        <taxon>Lactobacillaceae</taxon>
        <taxon>Lactobacillus</taxon>
    </lineage>
</organism>
<keyword id="KW-0687">Ribonucleoprotein</keyword>
<keyword id="KW-0689">Ribosomal protein</keyword>
<keyword id="KW-0694">RNA-binding</keyword>
<keyword id="KW-0699">rRNA-binding</keyword>
<dbReference type="EMBL" id="AE017198">
    <property type="protein sequence ID" value="AAS08336.1"/>
    <property type="molecule type" value="Genomic_DNA"/>
</dbReference>
<dbReference type="RefSeq" id="WP_004895861.1">
    <property type="nucleotide sequence ID" value="NC_005362.1"/>
</dbReference>
<dbReference type="SMR" id="P60741"/>
<dbReference type="GeneID" id="83569765"/>
<dbReference type="KEGG" id="ljo:LJ_0349"/>
<dbReference type="eggNOG" id="COG0198">
    <property type="taxonomic scope" value="Bacteria"/>
</dbReference>
<dbReference type="HOGENOM" id="CLU_093315_3_0_9"/>
<dbReference type="Proteomes" id="UP000000581">
    <property type="component" value="Chromosome"/>
</dbReference>
<dbReference type="GO" id="GO:1990904">
    <property type="term" value="C:ribonucleoprotein complex"/>
    <property type="evidence" value="ECO:0007669"/>
    <property type="project" value="UniProtKB-KW"/>
</dbReference>
<dbReference type="GO" id="GO:0005840">
    <property type="term" value="C:ribosome"/>
    <property type="evidence" value="ECO:0007669"/>
    <property type="project" value="UniProtKB-KW"/>
</dbReference>
<dbReference type="GO" id="GO:0019843">
    <property type="term" value="F:rRNA binding"/>
    <property type="evidence" value="ECO:0007669"/>
    <property type="project" value="UniProtKB-UniRule"/>
</dbReference>
<dbReference type="GO" id="GO:0003735">
    <property type="term" value="F:structural constituent of ribosome"/>
    <property type="evidence" value="ECO:0007669"/>
    <property type="project" value="InterPro"/>
</dbReference>
<dbReference type="GO" id="GO:0006412">
    <property type="term" value="P:translation"/>
    <property type="evidence" value="ECO:0007669"/>
    <property type="project" value="UniProtKB-UniRule"/>
</dbReference>
<dbReference type="CDD" id="cd06089">
    <property type="entry name" value="KOW_RPL26"/>
    <property type="match status" value="1"/>
</dbReference>
<dbReference type="Gene3D" id="2.30.30.30">
    <property type="match status" value="1"/>
</dbReference>
<dbReference type="HAMAP" id="MF_01326_B">
    <property type="entry name" value="Ribosomal_uL24_B"/>
    <property type="match status" value="1"/>
</dbReference>
<dbReference type="InterPro" id="IPR005824">
    <property type="entry name" value="KOW"/>
</dbReference>
<dbReference type="InterPro" id="IPR014722">
    <property type="entry name" value="Rib_uL2_dom2"/>
</dbReference>
<dbReference type="InterPro" id="IPR003256">
    <property type="entry name" value="Ribosomal_uL24"/>
</dbReference>
<dbReference type="InterPro" id="IPR005825">
    <property type="entry name" value="Ribosomal_uL24_CS"/>
</dbReference>
<dbReference type="InterPro" id="IPR041988">
    <property type="entry name" value="Ribosomal_uL24_KOW"/>
</dbReference>
<dbReference type="InterPro" id="IPR008991">
    <property type="entry name" value="Translation_prot_SH3-like_sf"/>
</dbReference>
<dbReference type="NCBIfam" id="TIGR01079">
    <property type="entry name" value="rplX_bact"/>
    <property type="match status" value="1"/>
</dbReference>
<dbReference type="PANTHER" id="PTHR12903">
    <property type="entry name" value="MITOCHONDRIAL RIBOSOMAL PROTEIN L24"/>
    <property type="match status" value="1"/>
</dbReference>
<dbReference type="Pfam" id="PF00467">
    <property type="entry name" value="KOW"/>
    <property type="match status" value="1"/>
</dbReference>
<dbReference type="Pfam" id="PF17136">
    <property type="entry name" value="ribosomal_L24"/>
    <property type="match status" value="1"/>
</dbReference>
<dbReference type="SMART" id="SM00739">
    <property type="entry name" value="KOW"/>
    <property type="match status" value="1"/>
</dbReference>
<dbReference type="SUPFAM" id="SSF50104">
    <property type="entry name" value="Translation proteins SH3-like domain"/>
    <property type="match status" value="1"/>
</dbReference>
<dbReference type="PROSITE" id="PS01108">
    <property type="entry name" value="RIBOSOMAL_L24"/>
    <property type="match status" value="1"/>
</dbReference>
<sequence>MFVKTGDKVKVIAGKDKGKEGTVLSVNAKTNRIVVKGVNKIKKHEKPSQTNANGGVVEKEGSIHASNVKVIAKKEDNNK</sequence>
<name>RL24_LACJO</name>
<protein>
    <recommendedName>
        <fullName evidence="1">Large ribosomal subunit protein uL24</fullName>
    </recommendedName>
    <alternativeName>
        <fullName evidence="2">50S ribosomal protein L24</fullName>
    </alternativeName>
</protein>